<reference key="1">
    <citation type="journal article" date="2001" name="Dev. Dyn.">
        <title>Gradients and forward spreading of vertebrate Hox gene expression detected using a Hox/lacZ transgene.</title>
        <authorList>
            <person name="Gaunt S.J."/>
        </authorList>
    </citation>
    <scope>NUCLEOTIDE SEQUENCE [GENOMIC DNA]</scope>
</reference>
<reference key="2">
    <citation type="submission" date="2001-08" db="EMBL/GenBank/DDBJ databases">
        <title>Expression and regulation of HOXA5, HOXA6 and HOXA7 during chick wing development.</title>
        <authorList>
            <person name="Oberg K.C."/>
            <person name="Pira C.U."/>
            <person name="Creamer D.H."/>
            <person name="Revelli J.-P."/>
            <person name="Eichele G."/>
        </authorList>
    </citation>
    <scope>NUCLEOTIDE SEQUENCE [MRNA]</scope>
</reference>
<keyword id="KW-0217">Developmental protein</keyword>
<keyword id="KW-0238">DNA-binding</keyword>
<keyword id="KW-0371">Homeobox</keyword>
<keyword id="KW-0539">Nucleus</keyword>
<keyword id="KW-1185">Reference proteome</keyword>
<keyword id="KW-0804">Transcription</keyword>
<keyword id="KW-0805">Transcription regulation</keyword>
<dbReference type="EMBL" id="AJ291729">
    <property type="protein sequence ID" value="CAC37629.1"/>
    <property type="molecule type" value="Genomic_DNA"/>
</dbReference>
<dbReference type="EMBL" id="AF408695">
    <property type="protein sequence ID" value="AAL01899.1"/>
    <property type="molecule type" value="mRNA"/>
</dbReference>
<dbReference type="RefSeq" id="NP_989926.1">
    <property type="nucleotide sequence ID" value="NM_204595.3"/>
</dbReference>
<dbReference type="RefSeq" id="XP_015136767.1">
    <property type="nucleotide sequence ID" value="XM_015281281.1"/>
</dbReference>
<dbReference type="BMRB" id="Q90VZ9"/>
<dbReference type="SMR" id="Q90VZ9"/>
<dbReference type="FunCoup" id="Q90VZ9">
    <property type="interactions" value="149"/>
</dbReference>
<dbReference type="STRING" id="9031.ENSGALP00000060910"/>
<dbReference type="PaxDb" id="9031-ENSGALP00000017991"/>
<dbReference type="Ensembl" id="ENSGALT00010004156.1">
    <property type="protein sequence ID" value="ENSGALP00010002453.1"/>
    <property type="gene ID" value="ENSGALG00010001826.1"/>
</dbReference>
<dbReference type="GeneID" id="395290"/>
<dbReference type="KEGG" id="gga:395290"/>
<dbReference type="CTD" id="3204"/>
<dbReference type="VEuPathDB" id="HostDB:geneid_395290"/>
<dbReference type="eggNOG" id="KOG0489">
    <property type="taxonomic scope" value="Eukaryota"/>
</dbReference>
<dbReference type="GeneTree" id="ENSGT00940000161013"/>
<dbReference type="HOGENOM" id="CLU_061398_1_1_1"/>
<dbReference type="InParanoid" id="Q90VZ9"/>
<dbReference type="OrthoDB" id="6159439at2759"/>
<dbReference type="PhylomeDB" id="Q90VZ9"/>
<dbReference type="PRO" id="PR:Q90VZ9"/>
<dbReference type="Proteomes" id="UP000000539">
    <property type="component" value="Chromosome 2"/>
</dbReference>
<dbReference type="Bgee" id="ENSGALG00000026989">
    <property type="expression patterns" value="Expressed in muscle tissue and 9 other cell types or tissues"/>
</dbReference>
<dbReference type="GO" id="GO:0005634">
    <property type="term" value="C:nucleus"/>
    <property type="evidence" value="ECO:0000318"/>
    <property type="project" value="GO_Central"/>
</dbReference>
<dbReference type="GO" id="GO:0000981">
    <property type="term" value="F:DNA-binding transcription factor activity, RNA polymerase II-specific"/>
    <property type="evidence" value="ECO:0000318"/>
    <property type="project" value="GO_Central"/>
</dbReference>
<dbReference type="GO" id="GO:0000978">
    <property type="term" value="F:RNA polymerase II cis-regulatory region sequence-specific DNA binding"/>
    <property type="evidence" value="ECO:0000318"/>
    <property type="project" value="GO_Central"/>
</dbReference>
<dbReference type="GO" id="GO:0009952">
    <property type="term" value="P:anterior/posterior pattern specification"/>
    <property type="evidence" value="ECO:0000318"/>
    <property type="project" value="GO_Central"/>
</dbReference>
<dbReference type="GO" id="GO:0006357">
    <property type="term" value="P:regulation of transcription by RNA polymerase II"/>
    <property type="evidence" value="ECO:0000318"/>
    <property type="project" value="GO_Central"/>
</dbReference>
<dbReference type="CDD" id="cd00086">
    <property type="entry name" value="homeodomain"/>
    <property type="match status" value="1"/>
</dbReference>
<dbReference type="FunFam" id="1.10.10.60:FF:000017">
    <property type="entry name" value="Homeobox protein antennapedia"/>
    <property type="match status" value="1"/>
</dbReference>
<dbReference type="Gene3D" id="1.10.10.60">
    <property type="entry name" value="Homeodomain-like"/>
    <property type="match status" value="1"/>
</dbReference>
<dbReference type="InterPro" id="IPR050296">
    <property type="entry name" value="Antp_homeobox"/>
</dbReference>
<dbReference type="InterPro" id="IPR001356">
    <property type="entry name" value="HD"/>
</dbReference>
<dbReference type="InterPro" id="IPR020479">
    <property type="entry name" value="HD_metazoa"/>
</dbReference>
<dbReference type="InterPro" id="IPR017995">
    <property type="entry name" value="Homeobox_antennapedia"/>
</dbReference>
<dbReference type="InterPro" id="IPR001827">
    <property type="entry name" value="Homeobox_Antennapedia_CS"/>
</dbReference>
<dbReference type="InterPro" id="IPR017970">
    <property type="entry name" value="Homeobox_CS"/>
</dbReference>
<dbReference type="InterPro" id="IPR009057">
    <property type="entry name" value="Homeodomain-like_sf"/>
</dbReference>
<dbReference type="PANTHER" id="PTHR45659">
    <property type="entry name" value="HOMEOBOX PROTEIN HOX"/>
    <property type="match status" value="1"/>
</dbReference>
<dbReference type="PANTHER" id="PTHR45659:SF12">
    <property type="entry name" value="HOMEOBOX PROTEIN HOX-A7"/>
    <property type="match status" value="1"/>
</dbReference>
<dbReference type="Pfam" id="PF00046">
    <property type="entry name" value="Homeodomain"/>
    <property type="match status" value="1"/>
</dbReference>
<dbReference type="PRINTS" id="PR00025">
    <property type="entry name" value="ANTENNAPEDIA"/>
</dbReference>
<dbReference type="PRINTS" id="PR00024">
    <property type="entry name" value="HOMEOBOX"/>
</dbReference>
<dbReference type="SMART" id="SM00389">
    <property type="entry name" value="HOX"/>
    <property type="match status" value="1"/>
</dbReference>
<dbReference type="SUPFAM" id="SSF46689">
    <property type="entry name" value="Homeodomain-like"/>
    <property type="match status" value="1"/>
</dbReference>
<dbReference type="PROSITE" id="PS00032">
    <property type="entry name" value="ANTENNAPEDIA"/>
    <property type="match status" value="1"/>
</dbReference>
<dbReference type="PROSITE" id="PS00027">
    <property type="entry name" value="HOMEOBOX_1"/>
    <property type="match status" value="1"/>
</dbReference>
<dbReference type="PROSITE" id="PS50071">
    <property type="entry name" value="HOMEOBOX_2"/>
    <property type="match status" value="1"/>
</dbReference>
<feature type="chain" id="PRO_0000200075" description="Homeobox protein Hox-A7">
    <location>
        <begin position="1"/>
        <end position="219"/>
    </location>
</feature>
<feature type="DNA-binding region" description="Homeobox" evidence="2">
    <location>
        <begin position="129"/>
        <end position="188"/>
    </location>
</feature>
<feature type="region of interest" description="Disordered" evidence="3">
    <location>
        <begin position="186"/>
        <end position="219"/>
    </location>
</feature>
<feature type="short sequence motif" description="Antp-type hexapeptide">
    <location>
        <begin position="118"/>
        <end position="123"/>
    </location>
</feature>
<feature type="compositionally biased region" description="Polar residues" evidence="3">
    <location>
        <begin position="195"/>
        <end position="205"/>
    </location>
</feature>
<organism>
    <name type="scientific">Gallus gallus</name>
    <name type="common">Chicken</name>
    <dbReference type="NCBI Taxonomy" id="9031"/>
    <lineage>
        <taxon>Eukaryota</taxon>
        <taxon>Metazoa</taxon>
        <taxon>Chordata</taxon>
        <taxon>Craniata</taxon>
        <taxon>Vertebrata</taxon>
        <taxon>Euteleostomi</taxon>
        <taxon>Archelosauria</taxon>
        <taxon>Archosauria</taxon>
        <taxon>Dinosauria</taxon>
        <taxon>Saurischia</taxon>
        <taxon>Theropoda</taxon>
        <taxon>Coelurosauria</taxon>
        <taxon>Aves</taxon>
        <taxon>Neognathae</taxon>
        <taxon>Galloanserae</taxon>
        <taxon>Galliformes</taxon>
        <taxon>Phasianidae</taxon>
        <taxon>Phasianinae</taxon>
        <taxon>Gallus</taxon>
    </lineage>
</organism>
<sequence>MSSSYYVNALFSKYTAGASLFQNAEPTSCSFASNSQRSGYGPGAGAFASSMPGLYNVNSTIYQSPFSSGYSLGSDAYNLHCSSFDQNIPVLCNDLTKPSCEKAEESNLHNQAEANFRIYPWMRSSGPDRKRGRQTYTRYQTLELEKEFHFNRYLTRRRRIEIAHALCLTERQIKIWFQNRRMKWKKEHKEESSSTPAPNEPTSAAASVEKVEEDEEEED</sequence>
<evidence type="ECO:0000250" key="1"/>
<evidence type="ECO:0000255" key="2">
    <source>
        <dbReference type="PROSITE-ProRule" id="PRU00108"/>
    </source>
</evidence>
<evidence type="ECO:0000256" key="3">
    <source>
        <dbReference type="SAM" id="MobiDB-lite"/>
    </source>
</evidence>
<evidence type="ECO:0000305" key="4"/>
<name>HXA7_CHICK</name>
<accession>Q90VZ9</accession>
<comment type="function">
    <text evidence="1">Sequence-specific transcription factor which is part of a developmental regulatory system that provides cells with specific positional identities on the anterior-posterior axis.</text>
</comment>
<comment type="subcellular location">
    <subcellularLocation>
        <location evidence="2">Nucleus</location>
    </subcellularLocation>
</comment>
<comment type="similarity">
    <text evidence="4">Belongs to the Antp homeobox family.</text>
</comment>
<proteinExistence type="evidence at transcript level"/>
<gene>
    <name type="primary">HOXA7</name>
    <name type="synonym">HOXA-7</name>
</gene>
<protein>
    <recommendedName>
        <fullName>Homeobox protein Hox-A7</fullName>
    </recommendedName>
</protein>